<feature type="chain" id="PRO_1000204730" description="Small ribosomal subunit protein bS18">
    <location>
        <begin position="1"/>
        <end position="85"/>
    </location>
</feature>
<evidence type="ECO:0000255" key="1">
    <source>
        <dbReference type="HAMAP-Rule" id="MF_00270"/>
    </source>
</evidence>
<evidence type="ECO:0000305" key="2"/>
<dbReference type="EMBL" id="CP001277">
    <property type="protein sequence ID" value="ACQ67325.1"/>
    <property type="molecule type" value="Genomic_DNA"/>
</dbReference>
<dbReference type="RefSeq" id="WP_015873149.1">
    <property type="nucleotide sequence ID" value="NC_012751.1"/>
</dbReference>
<dbReference type="SMR" id="C4K432"/>
<dbReference type="STRING" id="572265.HDEF_0583"/>
<dbReference type="GeneID" id="66260457"/>
<dbReference type="KEGG" id="hde:HDEF_0583"/>
<dbReference type="eggNOG" id="COG0238">
    <property type="taxonomic scope" value="Bacteria"/>
</dbReference>
<dbReference type="HOGENOM" id="CLU_148710_2_3_6"/>
<dbReference type="Proteomes" id="UP000002334">
    <property type="component" value="Chromosome"/>
</dbReference>
<dbReference type="GO" id="GO:0022627">
    <property type="term" value="C:cytosolic small ribosomal subunit"/>
    <property type="evidence" value="ECO:0007669"/>
    <property type="project" value="TreeGrafter"/>
</dbReference>
<dbReference type="GO" id="GO:0070181">
    <property type="term" value="F:small ribosomal subunit rRNA binding"/>
    <property type="evidence" value="ECO:0007669"/>
    <property type="project" value="TreeGrafter"/>
</dbReference>
<dbReference type="GO" id="GO:0003735">
    <property type="term" value="F:structural constituent of ribosome"/>
    <property type="evidence" value="ECO:0007669"/>
    <property type="project" value="InterPro"/>
</dbReference>
<dbReference type="GO" id="GO:0006412">
    <property type="term" value="P:translation"/>
    <property type="evidence" value="ECO:0007669"/>
    <property type="project" value="UniProtKB-UniRule"/>
</dbReference>
<dbReference type="FunFam" id="4.10.640.10:FF:000001">
    <property type="entry name" value="30S ribosomal protein S18"/>
    <property type="match status" value="1"/>
</dbReference>
<dbReference type="Gene3D" id="4.10.640.10">
    <property type="entry name" value="Ribosomal protein S18"/>
    <property type="match status" value="1"/>
</dbReference>
<dbReference type="HAMAP" id="MF_00270">
    <property type="entry name" value="Ribosomal_bS18"/>
    <property type="match status" value="1"/>
</dbReference>
<dbReference type="InterPro" id="IPR001648">
    <property type="entry name" value="Ribosomal_bS18"/>
</dbReference>
<dbReference type="InterPro" id="IPR018275">
    <property type="entry name" value="Ribosomal_bS18_CS"/>
</dbReference>
<dbReference type="InterPro" id="IPR036870">
    <property type="entry name" value="Ribosomal_bS18_sf"/>
</dbReference>
<dbReference type="NCBIfam" id="TIGR00165">
    <property type="entry name" value="S18"/>
    <property type="match status" value="1"/>
</dbReference>
<dbReference type="PANTHER" id="PTHR13479">
    <property type="entry name" value="30S RIBOSOMAL PROTEIN S18"/>
    <property type="match status" value="1"/>
</dbReference>
<dbReference type="PANTHER" id="PTHR13479:SF40">
    <property type="entry name" value="SMALL RIBOSOMAL SUBUNIT PROTEIN BS18M"/>
    <property type="match status" value="1"/>
</dbReference>
<dbReference type="Pfam" id="PF01084">
    <property type="entry name" value="Ribosomal_S18"/>
    <property type="match status" value="1"/>
</dbReference>
<dbReference type="PRINTS" id="PR00974">
    <property type="entry name" value="RIBOSOMALS18"/>
</dbReference>
<dbReference type="SUPFAM" id="SSF46911">
    <property type="entry name" value="Ribosomal protein S18"/>
    <property type="match status" value="1"/>
</dbReference>
<dbReference type="PROSITE" id="PS00057">
    <property type="entry name" value="RIBOSOMAL_S18"/>
    <property type="match status" value="1"/>
</dbReference>
<sequence length="85" mass="10039">MARYFRRRKFCRFTAEGVKQIDYKDIIMLKNYITESGKIVPSRITGTCSKYQRQLAQAIKVARYLSLLPYTDEHVRRESCTTEVP</sequence>
<gene>
    <name evidence="1" type="primary">rpsR</name>
    <name type="ordered locus">HDEF_0583</name>
</gene>
<name>RS18_HAMD5</name>
<protein>
    <recommendedName>
        <fullName evidence="1">Small ribosomal subunit protein bS18</fullName>
    </recommendedName>
    <alternativeName>
        <fullName evidence="2">30S ribosomal protein S18</fullName>
    </alternativeName>
</protein>
<keyword id="KW-0687">Ribonucleoprotein</keyword>
<keyword id="KW-0689">Ribosomal protein</keyword>
<keyword id="KW-0694">RNA-binding</keyword>
<keyword id="KW-0699">rRNA-binding</keyword>
<comment type="function">
    <text evidence="1">Binds as a heterodimer with protein bS6 to the central domain of the 16S rRNA, where it helps stabilize the platform of the 30S subunit.</text>
</comment>
<comment type="subunit">
    <text evidence="1">Part of the 30S ribosomal subunit. Forms a tight heterodimer with protein bS6.</text>
</comment>
<comment type="similarity">
    <text evidence="1">Belongs to the bacterial ribosomal protein bS18 family.</text>
</comment>
<accession>C4K432</accession>
<reference key="1">
    <citation type="journal article" date="2009" name="Proc. Natl. Acad. Sci. U.S.A.">
        <title>Hamiltonella defensa, genome evolution of protective bacterial endosymbiont from pathogenic ancestors.</title>
        <authorList>
            <person name="Degnan P.H."/>
            <person name="Yu Y."/>
            <person name="Sisneros N."/>
            <person name="Wing R.A."/>
            <person name="Moran N.A."/>
        </authorList>
    </citation>
    <scope>NUCLEOTIDE SEQUENCE [LARGE SCALE GENOMIC DNA]</scope>
    <source>
        <strain>5AT</strain>
    </source>
</reference>
<proteinExistence type="inferred from homology"/>
<organism>
    <name type="scientific">Hamiltonella defensa subsp. Acyrthosiphon pisum (strain 5AT)</name>
    <dbReference type="NCBI Taxonomy" id="572265"/>
    <lineage>
        <taxon>Bacteria</taxon>
        <taxon>Pseudomonadati</taxon>
        <taxon>Pseudomonadota</taxon>
        <taxon>Gammaproteobacteria</taxon>
        <taxon>Enterobacterales</taxon>
        <taxon>Enterobacteriaceae</taxon>
        <taxon>aphid secondary symbionts</taxon>
        <taxon>Candidatus Hamiltonella</taxon>
    </lineage>
</organism>